<feature type="chain" id="PRO_0000353344" description="DNA-directed RNA polymerase subunit beta'">
    <location>
        <begin position="1"/>
        <end position="1295"/>
    </location>
</feature>
<feature type="binding site" evidence="1">
    <location>
        <position position="60"/>
    </location>
    <ligand>
        <name>Zn(2+)</name>
        <dbReference type="ChEBI" id="CHEBI:29105"/>
        <label>1</label>
    </ligand>
</feature>
<feature type="binding site" evidence="1">
    <location>
        <position position="62"/>
    </location>
    <ligand>
        <name>Zn(2+)</name>
        <dbReference type="ChEBI" id="CHEBI:29105"/>
        <label>1</label>
    </ligand>
</feature>
<feature type="binding site" evidence="1">
    <location>
        <position position="75"/>
    </location>
    <ligand>
        <name>Zn(2+)</name>
        <dbReference type="ChEBI" id="CHEBI:29105"/>
        <label>1</label>
    </ligand>
</feature>
<feature type="binding site" evidence="1">
    <location>
        <position position="78"/>
    </location>
    <ligand>
        <name>Zn(2+)</name>
        <dbReference type="ChEBI" id="CHEBI:29105"/>
        <label>1</label>
    </ligand>
</feature>
<feature type="binding site" evidence="1">
    <location>
        <position position="516"/>
    </location>
    <ligand>
        <name>Mg(2+)</name>
        <dbReference type="ChEBI" id="CHEBI:18420"/>
    </ligand>
</feature>
<feature type="binding site" evidence="1">
    <location>
        <position position="518"/>
    </location>
    <ligand>
        <name>Mg(2+)</name>
        <dbReference type="ChEBI" id="CHEBI:18420"/>
    </ligand>
</feature>
<feature type="binding site" evidence="1">
    <location>
        <position position="520"/>
    </location>
    <ligand>
        <name>Mg(2+)</name>
        <dbReference type="ChEBI" id="CHEBI:18420"/>
    </ligand>
</feature>
<feature type="binding site" evidence="1">
    <location>
        <position position="841"/>
    </location>
    <ligand>
        <name>Zn(2+)</name>
        <dbReference type="ChEBI" id="CHEBI:29105"/>
        <label>2</label>
    </ligand>
</feature>
<feature type="binding site" evidence="1">
    <location>
        <position position="914"/>
    </location>
    <ligand>
        <name>Zn(2+)</name>
        <dbReference type="ChEBI" id="CHEBI:29105"/>
        <label>2</label>
    </ligand>
</feature>
<feature type="binding site" evidence="1">
    <location>
        <position position="921"/>
    </location>
    <ligand>
        <name>Zn(2+)</name>
        <dbReference type="ChEBI" id="CHEBI:29105"/>
        <label>2</label>
    </ligand>
</feature>
<feature type="binding site" evidence="1">
    <location>
        <position position="924"/>
    </location>
    <ligand>
        <name>Zn(2+)</name>
        <dbReference type="ChEBI" id="CHEBI:29105"/>
        <label>2</label>
    </ligand>
</feature>
<protein>
    <recommendedName>
        <fullName evidence="1">DNA-directed RNA polymerase subunit beta'</fullName>
        <shortName evidence="1">RNAP subunit beta'</shortName>
        <ecNumber evidence="1">2.7.7.6</ecNumber>
    </recommendedName>
    <alternativeName>
        <fullName evidence="1">RNA polymerase subunit beta'</fullName>
    </alternativeName>
    <alternativeName>
        <fullName evidence="1">Transcriptase subunit beta'</fullName>
    </alternativeName>
</protein>
<keyword id="KW-0240">DNA-directed RNA polymerase</keyword>
<keyword id="KW-0460">Magnesium</keyword>
<keyword id="KW-0479">Metal-binding</keyword>
<keyword id="KW-0548">Nucleotidyltransferase</keyword>
<keyword id="KW-0804">Transcription</keyword>
<keyword id="KW-0808">Transferase</keyword>
<keyword id="KW-0862">Zinc</keyword>
<comment type="function">
    <text evidence="1">DNA-dependent RNA polymerase catalyzes the transcription of DNA into RNA using the four ribonucleoside triphosphates as substrates.</text>
</comment>
<comment type="catalytic activity">
    <reaction evidence="1">
        <text>RNA(n) + a ribonucleoside 5'-triphosphate = RNA(n+1) + diphosphate</text>
        <dbReference type="Rhea" id="RHEA:21248"/>
        <dbReference type="Rhea" id="RHEA-COMP:14527"/>
        <dbReference type="Rhea" id="RHEA-COMP:17342"/>
        <dbReference type="ChEBI" id="CHEBI:33019"/>
        <dbReference type="ChEBI" id="CHEBI:61557"/>
        <dbReference type="ChEBI" id="CHEBI:140395"/>
        <dbReference type="EC" id="2.7.7.6"/>
    </reaction>
</comment>
<comment type="cofactor">
    <cofactor evidence="1">
        <name>Mg(2+)</name>
        <dbReference type="ChEBI" id="CHEBI:18420"/>
    </cofactor>
    <text evidence="1">Binds 1 Mg(2+) ion per subunit.</text>
</comment>
<comment type="cofactor">
    <cofactor evidence="1">
        <name>Zn(2+)</name>
        <dbReference type="ChEBI" id="CHEBI:29105"/>
    </cofactor>
    <text evidence="1">Binds 2 Zn(2+) ions per subunit.</text>
</comment>
<comment type="subunit">
    <text evidence="1">The RNAP catalytic core consists of 2 alpha, 1 beta, 1 beta' and 1 omega subunit. When a sigma factor is associated with the core the holoenzyme is formed, which can initiate transcription.</text>
</comment>
<comment type="similarity">
    <text evidence="1">Belongs to the RNA polymerase beta' chain family.</text>
</comment>
<comment type="sequence caution" evidence="2">
    <conflict type="erroneous initiation">
        <sequence resource="EMBL-CDS" id="ABQ17164"/>
    </conflict>
    <text>Truncated N-terminus.</text>
</comment>
<proteinExistence type="inferred from homology"/>
<organism>
    <name type="scientific">Dehalococcoides mccartyi (strain ATCC BAA-2100 / JCM 16839 / KCTC 5957 / BAV1)</name>
    <dbReference type="NCBI Taxonomy" id="216389"/>
    <lineage>
        <taxon>Bacteria</taxon>
        <taxon>Bacillati</taxon>
        <taxon>Chloroflexota</taxon>
        <taxon>Dehalococcoidia</taxon>
        <taxon>Dehalococcoidales</taxon>
        <taxon>Dehalococcoidaceae</taxon>
        <taxon>Dehalococcoides</taxon>
    </lineage>
</organism>
<sequence>MNEVNDFDAIRISLASPDQIRSWSYGEVTKPETINYRTLKPERDGLFCERIFGPIKDFECACGKYKRIRYKGIICDKCGVEIARAKVRRERMGHIELACPVGHIWFTRGIPSRVGLLLNLSTRSLERIIYYSHFIITAVNDEARAKAIKDLEVISSQRVADKGSEVDTRVAQMEAEDATVEAINQIRRDFSTEREQMEEDIQLLIDQLKDLQKGNLLTENQYYELKQRFSNVFEASMGAEALLKLLSYIDMDKERSKLIQETRSTSGQRRKKAGKQLQLVEAFRRSSNKPEWMIMTVLPVLPPDLRPMVQLDGGRFATSDLNDLYRRVINRNNRLQHLMEIGAPEIIIRNEKRMLQEAVDSLIDNGRRGKSVAVNGDHKAKSLSDLLRGKQGRFRQNLLGKRVDYSGRSVIVVGPSLKLSQCGLPRRMALELFKPFVMHRLVRDGLAPNIKSARRLVERARPEVYDILEEVVKDRPVLLNRAPTLHRLSIQAFEPVLIDGSALRLHPLVCSAFNADFDGDQMAVHVPLSKAAVKEARETMLSIHNMMLPSSGEPVVSPSLDMVFGCYYLTTTRPGAKGEGKIFGDFEEAKRYYEMGIIDLRAIIKVRDGKGNMLETTTGRIIFNDVLPKAVEFQNMDIPKSAIKKIIGRCYKILSSQDMAVMLDKIKELGFKFATSSGISIAMSDISVPREKTKLVAAADERTAIAEGQFARGLITEDERYNSIIETWMETTDRITDAIQAGFDKQGSVYMMANSGAKGNISQIRQMAGLRGLMTNPSGRIIDFPIKSSLREGLTALEYFISTHGARKGLADTALRTSGSGYLTRRLIDVTQDVIILQEDCGTANGTWIIEPKEKGMLPPLVDRILGRWTAHNVVHPQTGEIIVDNNEEIDEIKAKAIGEAGITEVFVRSPLTCESTHGMCRRCYGRDLGRVRLVDMNTAVGIIAAQSIGEPGTQLTLRTFHTGGVVGVDITTGLPRVEELFEARPPKVQSIISEIDGVVEVIENENGRHIRIASDEVYQDEYELPSGWKTQVQSRQWVDSGMVLASPELEGKSKAVVQSDQNVVARVAGEVTIEGNLITIKYSESEEREYTIPAAMQIKVKTGDTIRAGQQLTDGSINPQDILSILGRDAVQKYLVEEVQKVYYSQGVHINDKHIEVIARQMLIKVRIDSSGDTDLVPGELVDKFRYEDINAKVLAEGGEPATAHTVLMGITRASLSTESWLAAASFQETTRVLTDAAIYGRVDKLSGLKENVIIGKLIPAQCKSCKEATIERAERIAAAASAPAMSGLPENCL</sequence>
<name>RPOC_DEHMB</name>
<reference key="1">
    <citation type="submission" date="2007-05" db="EMBL/GenBank/DDBJ databases">
        <title>Complete sequence of Dehalococcoides sp. BAV1.</title>
        <authorList>
            <consortium name="US DOE Joint Genome Institute"/>
            <person name="Copeland A."/>
            <person name="Lucas S."/>
            <person name="Lapidus A."/>
            <person name="Barry K."/>
            <person name="Detter J.C."/>
            <person name="Glavina del Rio T."/>
            <person name="Hammon N."/>
            <person name="Israni S."/>
            <person name="Pitluck S."/>
            <person name="Lowry S."/>
            <person name="Clum A."/>
            <person name="Schmutz J."/>
            <person name="Larimer F."/>
            <person name="Land M."/>
            <person name="Hauser L."/>
            <person name="Kyrpides N."/>
            <person name="Kim E."/>
            <person name="Ritalahti K.M."/>
            <person name="Loeffler F."/>
            <person name="Richardson P."/>
        </authorList>
    </citation>
    <scope>NUCLEOTIDE SEQUENCE [LARGE SCALE GENOMIC DNA]</scope>
    <source>
        <strain>ATCC BAA-2100 / JCM 16839 / KCTC 5957 / BAV1</strain>
    </source>
</reference>
<dbReference type="EC" id="2.7.7.6" evidence="1"/>
<dbReference type="EMBL" id="CP000688">
    <property type="protein sequence ID" value="ABQ17164.1"/>
    <property type="status" value="ALT_INIT"/>
    <property type="molecule type" value="Genomic_DNA"/>
</dbReference>
<dbReference type="SMR" id="A5FRK6"/>
<dbReference type="KEGG" id="deb:DehaBAV1_0579"/>
<dbReference type="PATRIC" id="fig|216389.18.peg.625"/>
<dbReference type="HOGENOM" id="CLU_000524_3_1_0"/>
<dbReference type="GO" id="GO:0000428">
    <property type="term" value="C:DNA-directed RNA polymerase complex"/>
    <property type="evidence" value="ECO:0007669"/>
    <property type="project" value="UniProtKB-KW"/>
</dbReference>
<dbReference type="GO" id="GO:0003677">
    <property type="term" value="F:DNA binding"/>
    <property type="evidence" value="ECO:0007669"/>
    <property type="project" value="UniProtKB-UniRule"/>
</dbReference>
<dbReference type="GO" id="GO:0003899">
    <property type="term" value="F:DNA-directed RNA polymerase activity"/>
    <property type="evidence" value="ECO:0007669"/>
    <property type="project" value="UniProtKB-UniRule"/>
</dbReference>
<dbReference type="GO" id="GO:0000287">
    <property type="term" value="F:magnesium ion binding"/>
    <property type="evidence" value="ECO:0007669"/>
    <property type="project" value="UniProtKB-UniRule"/>
</dbReference>
<dbReference type="GO" id="GO:0008270">
    <property type="term" value="F:zinc ion binding"/>
    <property type="evidence" value="ECO:0007669"/>
    <property type="project" value="UniProtKB-UniRule"/>
</dbReference>
<dbReference type="GO" id="GO:0006351">
    <property type="term" value="P:DNA-templated transcription"/>
    <property type="evidence" value="ECO:0007669"/>
    <property type="project" value="UniProtKB-UniRule"/>
</dbReference>
<dbReference type="CDD" id="cd02655">
    <property type="entry name" value="RNAP_beta'_C"/>
    <property type="match status" value="1"/>
</dbReference>
<dbReference type="CDD" id="cd01609">
    <property type="entry name" value="RNAP_beta'_N"/>
    <property type="match status" value="1"/>
</dbReference>
<dbReference type="FunFam" id="4.10.860.120:FF:000001">
    <property type="entry name" value="DNA-directed RNA polymerase subunit beta"/>
    <property type="match status" value="1"/>
</dbReference>
<dbReference type="Gene3D" id="1.10.132.30">
    <property type="match status" value="1"/>
</dbReference>
<dbReference type="Gene3D" id="1.10.150.390">
    <property type="match status" value="1"/>
</dbReference>
<dbReference type="Gene3D" id="1.10.1790.20">
    <property type="match status" value="1"/>
</dbReference>
<dbReference type="Gene3D" id="1.10.40.90">
    <property type="match status" value="1"/>
</dbReference>
<dbReference type="Gene3D" id="2.40.40.20">
    <property type="match status" value="1"/>
</dbReference>
<dbReference type="Gene3D" id="2.40.50.100">
    <property type="match status" value="2"/>
</dbReference>
<dbReference type="Gene3D" id="4.10.860.120">
    <property type="entry name" value="RNA polymerase II, clamp domain"/>
    <property type="match status" value="1"/>
</dbReference>
<dbReference type="Gene3D" id="1.10.274.100">
    <property type="entry name" value="RNA polymerase Rpb1, domain 3"/>
    <property type="match status" value="2"/>
</dbReference>
<dbReference type="HAMAP" id="MF_01322">
    <property type="entry name" value="RNApol_bact_RpoC"/>
    <property type="match status" value="1"/>
</dbReference>
<dbReference type="InterPro" id="IPR045867">
    <property type="entry name" value="DNA-dir_RpoC_beta_prime"/>
</dbReference>
<dbReference type="InterPro" id="IPR012754">
    <property type="entry name" value="DNA-dir_RpoC_beta_prime_bact"/>
</dbReference>
<dbReference type="InterPro" id="IPR000722">
    <property type="entry name" value="RNA_pol_asu"/>
</dbReference>
<dbReference type="InterPro" id="IPR006592">
    <property type="entry name" value="RNA_pol_N"/>
</dbReference>
<dbReference type="InterPro" id="IPR007080">
    <property type="entry name" value="RNA_pol_Rpb1_1"/>
</dbReference>
<dbReference type="InterPro" id="IPR007066">
    <property type="entry name" value="RNA_pol_Rpb1_3"/>
</dbReference>
<dbReference type="InterPro" id="IPR042102">
    <property type="entry name" value="RNA_pol_Rpb1_3_sf"/>
</dbReference>
<dbReference type="InterPro" id="IPR007083">
    <property type="entry name" value="RNA_pol_Rpb1_4"/>
</dbReference>
<dbReference type="InterPro" id="IPR007081">
    <property type="entry name" value="RNA_pol_Rpb1_5"/>
</dbReference>
<dbReference type="InterPro" id="IPR044893">
    <property type="entry name" value="RNA_pol_Rpb1_clamp_domain"/>
</dbReference>
<dbReference type="InterPro" id="IPR038120">
    <property type="entry name" value="Rpb1_funnel_sf"/>
</dbReference>
<dbReference type="InterPro" id="IPR011054">
    <property type="entry name" value="Rudment_hybrid_motif"/>
</dbReference>
<dbReference type="NCBIfam" id="TIGR02386">
    <property type="entry name" value="rpoC_TIGR"/>
    <property type="match status" value="1"/>
</dbReference>
<dbReference type="PANTHER" id="PTHR19376">
    <property type="entry name" value="DNA-DIRECTED RNA POLYMERASE"/>
    <property type="match status" value="1"/>
</dbReference>
<dbReference type="PANTHER" id="PTHR19376:SF54">
    <property type="entry name" value="DNA-DIRECTED RNA POLYMERASE SUBUNIT BETA"/>
    <property type="match status" value="1"/>
</dbReference>
<dbReference type="Pfam" id="PF04997">
    <property type="entry name" value="RNA_pol_Rpb1_1"/>
    <property type="match status" value="1"/>
</dbReference>
<dbReference type="Pfam" id="PF00623">
    <property type="entry name" value="RNA_pol_Rpb1_2"/>
    <property type="match status" value="2"/>
</dbReference>
<dbReference type="Pfam" id="PF04983">
    <property type="entry name" value="RNA_pol_Rpb1_3"/>
    <property type="match status" value="1"/>
</dbReference>
<dbReference type="Pfam" id="PF05000">
    <property type="entry name" value="RNA_pol_Rpb1_4"/>
    <property type="match status" value="1"/>
</dbReference>
<dbReference type="Pfam" id="PF04998">
    <property type="entry name" value="RNA_pol_Rpb1_5"/>
    <property type="match status" value="1"/>
</dbReference>
<dbReference type="SMART" id="SM00663">
    <property type="entry name" value="RPOLA_N"/>
    <property type="match status" value="1"/>
</dbReference>
<dbReference type="SUPFAM" id="SSF64484">
    <property type="entry name" value="beta and beta-prime subunits of DNA dependent RNA-polymerase"/>
    <property type="match status" value="1"/>
</dbReference>
<dbReference type="SUPFAM" id="SSF51246">
    <property type="entry name" value="Rudiment single hybrid motif"/>
    <property type="match status" value="1"/>
</dbReference>
<accession>A5FRK6</accession>
<evidence type="ECO:0000255" key="1">
    <source>
        <dbReference type="HAMAP-Rule" id="MF_01322"/>
    </source>
</evidence>
<evidence type="ECO:0000305" key="2"/>
<gene>
    <name evidence="1" type="primary">rpoC</name>
    <name type="ordered locus">DehaBAV1_0579</name>
</gene>